<evidence type="ECO:0000255" key="1">
    <source>
        <dbReference type="PROSITE-ProRule" id="PRU00164"/>
    </source>
</evidence>
<evidence type="ECO:0000256" key="2">
    <source>
        <dbReference type="SAM" id="MobiDB-lite"/>
    </source>
</evidence>
<evidence type="ECO:0000269" key="3">
    <source>
    </source>
</evidence>
<evidence type="ECO:0000305" key="4"/>
<gene>
    <name type="primary">sbp1</name>
    <name type="synonym">yrb1</name>
    <name type="ORF">SPBC1773.07c</name>
</gene>
<name>RANG_SCHPO</name>
<feature type="chain" id="PRO_0000213669" description="Ran-specific GTPase-activating protein 1">
    <location>
        <begin position="1"/>
        <end position="215"/>
    </location>
</feature>
<feature type="domain" description="RanBD1" evidence="1">
    <location>
        <begin position="74"/>
        <end position="210"/>
    </location>
</feature>
<feature type="region of interest" description="Disordered" evidence="2">
    <location>
        <begin position="1"/>
        <end position="78"/>
    </location>
</feature>
<feature type="compositionally biased region" description="Basic and acidic residues" evidence="2">
    <location>
        <begin position="1"/>
        <end position="18"/>
    </location>
</feature>
<feature type="compositionally biased region" description="Basic and acidic residues" evidence="2">
    <location>
        <begin position="26"/>
        <end position="35"/>
    </location>
</feature>
<feature type="modified residue" description="Phosphoserine" evidence="3">
    <location>
        <position position="70"/>
    </location>
</feature>
<feature type="sequence conflict" description="In Ref. 1; BAA23793." evidence="4" ref="1">
    <original>V</original>
    <variation>G</variation>
    <location>
        <position position="135"/>
    </location>
</feature>
<organism>
    <name type="scientific">Schizosaccharomyces pombe (strain 972 / ATCC 24843)</name>
    <name type="common">Fission yeast</name>
    <dbReference type="NCBI Taxonomy" id="284812"/>
    <lineage>
        <taxon>Eukaryota</taxon>
        <taxon>Fungi</taxon>
        <taxon>Dikarya</taxon>
        <taxon>Ascomycota</taxon>
        <taxon>Taphrinomycotina</taxon>
        <taxon>Schizosaccharomycetes</taxon>
        <taxon>Schizosaccharomycetales</taxon>
        <taxon>Schizosaccharomycetaceae</taxon>
        <taxon>Schizosaccharomyces</taxon>
    </lineage>
</organism>
<protein>
    <recommendedName>
        <fullName>Ran-specific GTPase-activating protein 1</fullName>
    </recommendedName>
    <alternativeName>
        <fullName>Ran-binding protein 1</fullName>
        <shortName>RANBP1</shortName>
    </alternativeName>
    <alternativeName>
        <fullName>Spi1-binding protein</fullName>
    </alternativeName>
</protein>
<accession>Q09717</accession>
<accession>O42635</accession>
<comment type="function">
    <text>Stimulates the GTPase activity in the presence of RNA1. May potentiate the action of RanGAP1 (RNA1), thus playing the role of a negative regulator.</text>
</comment>
<comment type="subcellular location">
    <subcellularLocation>
        <location>Cytoplasm</location>
    </subcellularLocation>
    <text>Mainly cytoplasmic.</text>
</comment>
<comment type="similarity">
    <text evidence="4">Belongs to the RANBP1 family.</text>
</comment>
<reference key="1">
    <citation type="journal article" date="1998" name="Genetics">
        <title>The identification of cDNAs that affect the mitosis-to-interphase transition in Schizosaccharomyces pombe, including sbp1, which encodes a spi1p-GTP-binding protein.</title>
        <authorList>
            <person name="Ho X."/>
            <person name="Hayashi N."/>
            <person name="Walcott N.G."/>
            <person name="Azuma Y."/>
            <person name="Patterson T.E."/>
            <person name="Bischoff F.R."/>
            <person name="Nishimoto T."/>
            <person name="Sazer S."/>
        </authorList>
    </citation>
    <scope>NUCLEOTIDE SEQUENCE [MRNA]</scope>
    <scope>CHARACTERIZATION</scope>
    <source>
        <strain>972 / ATCC 24843</strain>
    </source>
</reference>
<reference key="2">
    <citation type="journal article" date="2002" name="Nature">
        <title>The genome sequence of Schizosaccharomyces pombe.</title>
        <authorList>
            <person name="Wood V."/>
            <person name="Gwilliam R."/>
            <person name="Rajandream M.A."/>
            <person name="Lyne M.H."/>
            <person name="Lyne R."/>
            <person name="Stewart A."/>
            <person name="Sgouros J.G."/>
            <person name="Peat N."/>
            <person name="Hayles J."/>
            <person name="Baker S.G."/>
            <person name="Basham D."/>
            <person name="Bowman S."/>
            <person name="Brooks K."/>
            <person name="Brown D."/>
            <person name="Brown S."/>
            <person name="Chillingworth T."/>
            <person name="Churcher C.M."/>
            <person name="Collins M."/>
            <person name="Connor R."/>
            <person name="Cronin A."/>
            <person name="Davis P."/>
            <person name="Feltwell T."/>
            <person name="Fraser A."/>
            <person name="Gentles S."/>
            <person name="Goble A."/>
            <person name="Hamlin N."/>
            <person name="Harris D.E."/>
            <person name="Hidalgo J."/>
            <person name="Hodgson G."/>
            <person name="Holroyd S."/>
            <person name="Hornsby T."/>
            <person name="Howarth S."/>
            <person name="Huckle E.J."/>
            <person name="Hunt S."/>
            <person name="Jagels K."/>
            <person name="James K.D."/>
            <person name="Jones L."/>
            <person name="Jones M."/>
            <person name="Leather S."/>
            <person name="McDonald S."/>
            <person name="McLean J."/>
            <person name="Mooney P."/>
            <person name="Moule S."/>
            <person name="Mungall K.L."/>
            <person name="Murphy L.D."/>
            <person name="Niblett D."/>
            <person name="Odell C."/>
            <person name="Oliver K."/>
            <person name="O'Neil S."/>
            <person name="Pearson D."/>
            <person name="Quail M.A."/>
            <person name="Rabbinowitsch E."/>
            <person name="Rutherford K.M."/>
            <person name="Rutter S."/>
            <person name="Saunders D."/>
            <person name="Seeger K."/>
            <person name="Sharp S."/>
            <person name="Skelton J."/>
            <person name="Simmonds M.N."/>
            <person name="Squares R."/>
            <person name="Squares S."/>
            <person name="Stevens K."/>
            <person name="Taylor K."/>
            <person name="Taylor R.G."/>
            <person name="Tivey A."/>
            <person name="Walsh S.V."/>
            <person name="Warren T."/>
            <person name="Whitehead S."/>
            <person name="Woodward J.R."/>
            <person name="Volckaert G."/>
            <person name="Aert R."/>
            <person name="Robben J."/>
            <person name="Grymonprez B."/>
            <person name="Weltjens I."/>
            <person name="Vanstreels E."/>
            <person name="Rieger M."/>
            <person name="Schaefer M."/>
            <person name="Mueller-Auer S."/>
            <person name="Gabel C."/>
            <person name="Fuchs M."/>
            <person name="Duesterhoeft A."/>
            <person name="Fritzc C."/>
            <person name="Holzer E."/>
            <person name="Moestl D."/>
            <person name="Hilbert H."/>
            <person name="Borzym K."/>
            <person name="Langer I."/>
            <person name="Beck A."/>
            <person name="Lehrach H."/>
            <person name="Reinhardt R."/>
            <person name="Pohl T.M."/>
            <person name="Eger P."/>
            <person name="Zimmermann W."/>
            <person name="Wedler H."/>
            <person name="Wambutt R."/>
            <person name="Purnelle B."/>
            <person name="Goffeau A."/>
            <person name="Cadieu E."/>
            <person name="Dreano S."/>
            <person name="Gloux S."/>
            <person name="Lelaure V."/>
            <person name="Mottier S."/>
            <person name="Galibert F."/>
            <person name="Aves S.J."/>
            <person name="Xiang Z."/>
            <person name="Hunt C."/>
            <person name="Moore K."/>
            <person name="Hurst S.M."/>
            <person name="Lucas M."/>
            <person name="Rochet M."/>
            <person name="Gaillardin C."/>
            <person name="Tallada V.A."/>
            <person name="Garzon A."/>
            <person name="Thode G."/>
            <person name="Daga R.R."/>
            <person name="Cruzado L."/>
            <person name="Jimenez J."/>
            <person name="Sanchez M."/>
            <person name="del Rey F."/>
            <person name="Benito J."/>
            <person name="Dominguez A."/>
            <person name="Revuelta J.L."/>
            <person name="Moreno S."/>
            <person name="Armstrong J."/>
            <person name="Forsburg S.L."/>
            <person name="Cerutti L."/>
            <person name="Lowe T."/>
            <person name="McCombie W.R."/>
            <person name="Paulsen I."/>
            <person name="Potashkin J."/>
            <person name="Shpakovski G.V."/>
            <person name="Ussery D."/>
            <person name="Barrell B.G."/>
            <person name="Nurse P."/>
        </authorList>
    </citation>
    <scope>NUCLEOTIDE SEQUENCE [LARGE SCALE GENOMIC DNA]</scope>
    <source>
        <strain>972 / ATCC 24843</strain>
    </source>
</reference>
<reference key="3">
    <citation type="journal article" date="2008" name="J. Proteome Res.">
        <title>Phosphoproteome analysis of fission yeast.</title>
        <authorList>
            <person name="Wilson-Grady J.T."/>
            <person name="Villen J."/>
            <person name="Gygi S.P."/>
        </authorList>
    </citation>
    <scope>PHOSPHORYLATION [LARGE SCALE ANALYSIS] AT SER-70</scope>
    <scope>IDENTIFICATION BY MASS SPECTROMETRY</scope>
</reference>
<keyword id="KW-0963">Cytoplasm</keyword>
<keyword id="KW-0343">GTPase activation</keyword>
<keyword id="KW-0597">Phosphoprotein</keyword>
<keyword id="KW-1185">Reference proteome</keyword>
<sequence>MSAEQEKKTQGTTKEEQKSSFASEDVASKQTEEAKAVFGDGVAKQENKSGASTNDEKKPAEGDEDAEPASPEVHFEPIVKLSAVETKTNEEEETVEFKMRAKLFRFDKAASEWKERGTGDARLLKHKETGKTRLVMRRDKTLKVCANHLLMPEMKLTPNVGSDRSWVWTVAADVSEGEPTAETFAIRFANSENANLFKENFEKYQEENAKILKKN</sequence>
<dbReference type="EMBL" id="D86381">
    <property type="protein sequence ID" value="BAA13080.1"/>
    <property type="molecule type" value="Genomic_DNA"/>
</dbReference>
<dbReference type="EMBL" id="D76431">
    <property type="protein sequence ID" value="BAA23793.1"/>
    <property type="molecule type" value="mRNA"/>
</dbReference>
<dbReference type="EMBL" id="CU329671">
    <property type="protein sequence ID" value="CAA21912.1"/>
    <property type="molecule type" value="Genomic_DNA"/>
</dbReference>
<dbReference type="PIR" id="T43209">
    <property type="entry name" value="T43209"/>
</dbReference>
<dbReference type="PIR" id="T51307">
    <property type="entry name" value="T51307"/>
</dbReference>
<dbReference type="RefSeq" id="NP_595122.1">
    <property type="nucleotide sequence ID" value="NM_001021029.2"/>
</dbReference>
<dbReference type="SMR" id="Q09717"/>
<dbReference type="BioGRID" id="276679">
    <property type="interactions" value="3"/>
</dbReference>
<dbReference type="FunCoup" id="Q09717">
    <property type="interactions" value="715"/>
</dbReference>
<dbReference type="STRING" id="284812.Q09717"/>
<dbReference type="iPTMnet" id="Q09717"/>
<dbReference type="PaxDb" id="4896-SPBC1773.07c.1"/>
<dbReference type="EnsemblFungi" id="SPBC1773.07c.1">
    <property type="protein sequence ID" value="SPBC1773.07c.1:pep"/>
    <property type="gene ID" value="SPBC1773.07c"/>
</dbReference>
<dbReference type="GeneID" id="2540142"/>
<dbReference type="KEGG" id="spo:2540142"/>
<dbReference type="PomBase" id="SPBC1773.07c">
    <property type="gene designation" value="sbp1"/>
</dbReference>
<dbReference type="VEuPathDB" id="FungiDB:SPBC1773.07c"/>
<dbReference type="eggNOG" id="KOG0864">
    <property type="taxonomic scope" value="Eukaryota"/>
</dbReference>
<dbReference type="HOGENOM" id="CLU_067861_0_1_1"/>
<dbReference type="InParanoid" id="Q09717"/>
<dbReference type="OMA" id="CANHLLM"/>
<dbReference type="PhylomeDB" id="Q09717"/>
<dbReference type="Reactome" id="R-SPO-159227">
    <property type="pathway name" value="Transport of the SLBP independent Mature mRNA"/>
</dbReference>
<dbReference type="Reactome" id="R-SPO-159231">
    <property type="pathway name" value="Transport of Mature mRNA Derived from an Intronless Transcript"/>
</dbReference>
<dbReference type="Reactome" id="R-SPO-159236">
    <property type="pathway name" value="Transport of Mature mRNA derived from an Intron-Containing Transcript"/>
</dbReference>
<dbReference type="Reactome" id="R-SPO-3371453">
    <property type="pathway name" value="Regulation of HSF1-mediated heat shock response"/>
</dbReference>
<dbReference type="Reactome" id="R-SPO-4085377">
    <property type="pathway name" value="SUMOylation of SUMOylation proteins"/>
</dbReference>
<dbReference type="Reactome" id="R-SPO-4551638">
    <property type="pathway name" value="SUMOylation of chromatin organization proteins"/>
</dbReference>
<dbReference type="Reactome" id="R-SPO-4570464">
    <property type="pathway name" value="SUMOylation of RNA binding proteins"/>
</dbReference>
<dbReference type="Reactome" id="R-SPO-5578749">
    <property type="pathway name" value="Transcriptional regulation by small RNAs"/>
</dbReference>
<dbReference type="PRO" id="PR:Q09717"/>
<dbReference type="Proteomes" id="UP000002485">
    <property type="component" value="Chromosome II"/>
</dbReference>
<dbReference type="GO" id="GO:0005737">
    <property type="term" value="C:cytoplasm"/>
    <property type="evidence" value="ECO:0000318"/>
    <property type="project" value="GO_Central"/>
</dbReference>
<dbReference type="GO" id="GO:0005829">
    <property type="term" value="C:cytosol"/>
    <property type="evidence" value="ECO:0000314"/>
    <property type="project" value="PomBase"/>
</dbReference>
<dbReference type="GO" id="GO:0005643">
    <property type="term" value="C:nuclear pore"/>
    <property type="evidence" value="ECO:0000318"/>
    <property type="project" value="GO_Central"/>
</dbReference>
<dbReference type="GO" id="GO:0005525">
    <property type="term" value="F:GTP binding"/>
    <property type="evidence" value="ECO:0000304"/>
    <property type="project" value="PomBase"/>
</dbReference>
<dbReference type="GO" id="GO:0005096">
    <property type="term" value="F:GTPase activator activity"/>
    <property type="evidence" value="ECO:0007669"/>
    <property type="project" value="UniProtKB-KW"/>
</dbReference>
<dbReference type="GO" id="GO:0006606">
    <property type="term" value="P:protein import into nucleus"/>
    <property type="evidence" value="ECO:0000266"/>
    <property type="project" value="PomBase"/>
</dbReference>
<dbReference type="GO" id="GO:0031291">
    <property type="term" value="P:Ran protein signal transduction"/>
    <property type="evidence" value="ECO:0000305"/>
    <property type="project" value="PomBase"/>
</dbReference>
<dbReference type="GO" id="GO:0006405">
    <property type="term" value="P:RNA export from nucleus"/>
    <property type="evidence" value="ECO:0000266"/>
    <property type="project" value="PomBase"/>
</dbReference>
<dbReference type="CDD" id="cd13179">
    <property type="entry name" value="RanBD_RanBP1"/>
    <property type="match status" value="1"/>
</dbReference>
<dbReference type="FunFam" id="2.30.29.30:FF:000312">
    <property type="entry name" value="Ran binding protein 1"/>
    <property type="match status" value="1"/>
</dbReference>
<dbReference type="Gene3D" id="2.30.29.30">
    <property type="entry name" value="Pleckstrin-homology domain (PH domain)/Phosphotyrosine-binding domain (PTB)"/>
    <property type="match status" value="1"/>
</dbReference>
<dbReference type="InterPro" id="IPR011993">
    <property type="entry name" value="PH-like_dom_sf"/>
</dbReference>
<dbReference type="InterPro" id="IPR000156">
    <property type="entry name" value="Ran_bind_dom"/>
</dbReference>
<dbReference type="InterPro" id="IPR045255">
    <property type="entry name" value="RanBP1-like"/>
</dbReference>
<dbReference type="InterPro" id="IPR045256">
    <property type="entry name" value="RanBP1_RanBD"/>
</dbReference>
<dbReference type="PANTHER" id="PTHR23138:SF87">
    <property type="entry name" value="E3 SUMO-PROTEIN LIGASE RANBP2"/>
    <property type="match status" value="1"/>
</dbReference>
<dbReference type="PANTHER" id="PTHR23138">
    <property type="entry name" value="RAN BINDING PROTEIN"/>
    <property type="match status" value="1"/>
</dbReference>
<dbReference type="Pfam" id="PF00638">
    <property type="entry name" value="Ran_BP1"/>
    <property type="match status" value="1"/>
</dbReference>
<dbReference type="SMART" id="SM00160">
    <property type="entry name" value="RanBD"/>
    <property type="match status" value="1"/>
</dbReference>
<dbReference type="SUPFAM" id="SSF50729">
    <property type="entry name" value="PH domain-like"/>
    <property type="match status" value="1"/>
</dbReference>
<dbReference type="PROSITE" id="PS50196">
    <property type="entry name" value="RANBD1"/>
    <property type="match status" value="1"/>
</dbReference>
<proteinExistence type="evidence at protein level"/>